<organism>
    <name type="scientific">Streptococcus thermophilus (strain ATCC BAA-250 / LMG 18311)</name>
    <dbReference type="NCBI Taxonomy" id="264199"/>
    <lineage>
        <taxon>Bacteria</taxon>
        <taxon>Bacillati</taxon>
        <taxon>Bacillota</taxon>
        <taxon>Bacilli</taxon>
        <taxon>Lactobacillales</taxon>
        <taxon>Streptococcaceae</taxon>
        <taxon>Streptococcus</taxon>
    </lineage>
</organism>
<sequence>MNTKELIAAEIAKVVPELEQENIQNLLEIPKNADMGDLAFPAFSLAKVLRKAPQMIAADIAEKIDASNFEKVEAVGPYINIFLDKSKISADVLGQVIAQGSHYADQNIGNGRNIAFDMSSPNIAKPFSIGHLRSTVIADALANIVAKQGYKPVRINHLGDWGKQFGMLIVAYKKWGSEEAVKANPINELLQLYVRINAEAEEDPSVDEEAREWFRKLEAGDEEATALWQWFRDESLVEFNRLYDELGVSFDSYNGEAFYNDKMDEVVDILTKKGLLQESQGAQVVNLEKYGIEHPALIKKSDGATLYITRDLAAALYRKRTYDFAKAIYVVGNEQSAHFKQLKAVLKEMGYNWSDDMTHVAFGLVTKNGKKLSTRKGNVILLEPTIAEAVNRAQAQIEAKNPNLPNKEAIAHAVGVGAIKFYDLKTDRMNGYDFDLDAMVSFEGETGPYVQYAHARIQSILRKADFTPSADATYSLNDVESWEIIKLLQDFPRIINRASDNFEPSIVAKFAISLAQAFNKYYAHTRILDESPERDSRLALCYATATVLKEALRLLGVEAPDEM</sequence>
<proteinExistence type="inferred from homology"/>
<accession>Q5M6I4</accession>
<feature type="chain" id="PRO_0000242101" description="Arginine--tRNA ligase">
    <location>
        <begin position="1"/>
        <end position="563"/>
    </location>
</feature>
<feature type="short sequence motif" description="'HIGH' region">
    <location>
        <begin position="121"/>
        <end position="131"/>
    </location>
</feature>
<dbReference type="EC" id="6.1.1.19" evidence="1"/>
<dbReference type="EMBL" id="CP000023">
    <property type="protein sequence ID" value="AAV59777.1"/>
    <property type="molecule type" value="Genomic_DNA"/>
</dbReference>
<dbReference type="RefSeq" id="WP_011225275.1">
    <property type="nucleotide sequence ID" value="NC_006448.1"/>
</dbReference>
<dbReference type="SMR" id="Q5M6I4"/>
<dbReference type="STRING" id="264199.stu0047"/>
<dbReference type="GeneID" id="66897965"/>
<dbReference type="KEGG" id="stl:stu0047"/>
<dbReference type="PATRIC" id="fig|264199.4.peg.49"/>
<dbReference type="eggNOG" id="COG0018">
    <property type="taxonomic scope" value="Bacteria"/>
</dbReference>
<dbReference type="HOGENOM" id="CLU_006406_6_1_9"/>
<dbReference type="Proteomes" id="UP000001170">
    <property type="component" value="Chromosome"/>
</dbReference>
<dbReference type="GO" id="GO:0005737">
    <property type="term" value="C:cytoplasm"/>
    <property type="evidence" value="ECO:0007669"/>
    <property type="project" value="UniProtKB-SubCell"/>
</dbReference>
<dbReference type="GO" id="GO:0004814">
    <property type="term" value="F:arginine-tRNA ligase activity"/>
    <property type="evidence" value="ECO:0007669"/>
    <property type="project" value="UniProtKB-UniRule"/>
</dbReference>
<dbReference type="GO" id="GO:0005524">
    <property type="term" value="F:ATP binding"/>
    <property type="evidence" value="ECO:0007669"/>
    <property type="project" value="UniProtKB-UniRule"/>
</dbReference>
<dbReference type="GO" id="GO:0006420">
    <property type="term" value="P:arginyl-tRNA aminoacylation"/>
    <property type="evidence" value="ECO:0007669"/>
    <property type="project" value="UniProtKB-UniRule"/>
</dbReference>
<dbReference type="CDD" id="cd07956">
    <property type="entry name" value="Anticodon_Ia_Arg"/>
    <property type="match status" value="1"/>
</dbReference>
<dbReference type="CDD" id="cd00671">
    <property type="entry name" value="ArgRS_core"/>
    <property type="match status" value="1"/>
</dbReference>
<dbReference type="FunFam" id="3.40.50.620:FF:000116">
    <property type="entry name" value="Arginine--tRNA ligase"/>
    <property type="match status" value="1"/>
</dbReference>
<dbReference type="FunFam" id="1.10.730.10:FF:000006">
    <property type="entry name" value="Arginyl-tRNA synthetase 2, mitochondrial"/>
    <property type="match status" value="1"/>
</dbReference>
<dbReference type="Gene3D" id="3.30.1360.70">
    <property type="entry name" value="Arginyl tRNA synthetase N-terminal domain"/>
    <property type="match status" value="1"/>
</dbReference>
<dbReference type="Gene3D" id="3.40.50.620">
    <property type="entry name" value="HUPs"/>
    <property type="match status" value="1"/>
</dbReference>
<dbReference type="Gene3D" id="1.10.730.10">
    <property type="entry name" value="Isoleucyl-tRNA Synthetase, Domain 1"/>
    <property type="match status" value="1"/>
</dbReference>
<dbReference type="HAMAP" id="MF_00123">
    <property type="entry name" value="Arg_tRNA_synth"/>
    <property type="match status" value="1"/>
</dbReference>
<dbReference type="InterPro" id="IPR001278">
    <property type="entry name" value="Arg-tRNA-ligase"/>
</dbReference>
<dbReference type="InterPro" id="IPR005148">
    <property type="entry name" value="Arg-tRNA-synth_N"/>
</dbReference>
<dbReference type="InterPro" id="IPR036695">
    <property type="entry name" value="Arg-tRNA-synth_N_sf"/>
</dbReference>
<dbReference type="InterPro" id="IPR035684">
    <property type="entry name" value="ArgRS_core"/>
</dbReference>
<dbReference type="InterPro" id="IPR008909">
    <property type="entry name" value="DALR_anticod-bd"/>
</dbReference>
<dbReference type="InterPro" id="IPR014729">
    <property type="entry name" value="Rossmann-like_a/b/a_fold"/>
</dbReference>
<dbReference type="InterPro" id="IPR009080">
    <property type="entry name" value="tRNAsynth_Ia_anticodon-bd"/>
</dbReference>
<dbReference type="NCBIfam" id="TIGR00456">
    <property type="entry name" value="argS"/>
    <property type="match status" value="1"/>
</dbReference>
<dbReference type="PANTHER" id="PTHR11956:SF5">
    <property type="entry name" value="ARGININE--TRNA LIGASE, CYTOPLASMIC"/>
    <property type="match status" value="1"/>
</dbReference>
<dbReference type="PANTHER" id="PTHR11956">
    <property type="entry name" value="ARGINYL-TRNA SYNTHETASE"/>
    <property type="match status" value="1"/>
</dbReference>
<dbReference type="Pfam" id="PF03485">
    <property type="entry name" value="Arg_tRNA_synt_N"/>
    <property type="match status" value="1"/>
</dbReference>
<dbReference type="Pfam" id="PF05746">
    <property type="entry name" value="DALR_1"/>
    <property type="match status" value="1"/>
</dbReference>
<dbReference type="Pfam" id="PF00750">
    <property type="entry name" value="tRNA-synt_1d"/>
    <property type="match status" value="1"/>
</dbReference>
<dbReference type="PRINTS" id="PR01038">
    <property type="entry name" value="TRNASYNTHARG"/>
</dbReference>
<dbReference type="SMART" id="SM01016">
    <property type="entry name" value="Arg_tRNA_synt_N"/>
    <property type="match status" value="1"/>
</dbReference>
<dbReference type="SMART" id="SM00836">
    <property type="entry name" value="DALR_1"/>
    <property type="match status" value="1"/>
</dbReference>
<dbReference type="SUPFAM" id="SSF47323">
    <property type="entry name" value="Anticodon-binding domain of a subclass of class I aminoacyl-tRNA synthetases"/>
    <property type="match status" value="1"/>
</dbReference>
<dbReference type="SUPFAM" id="SSF55190">
    <property type="entry name" value="Arginyl-tRNA synthetase (ArgRS), N-terminal 'additional' domain"/>
    <property type="match status" value="1"/>
</dbReference>
<dbReference type="SUPFAM" id="SSF52374">
    <property type="entry name" value="Nucleotidylyl transferase"/>
    <property type="match status" value="1"/>
</dbReference>
<reference key="1">
    <citation type="journal article" date="2004" name="Nat. Biotechnol.">
        <title>Complete sequence and comparative genome analysis of the dairy bacterium Streptococcus thermophilus.</title>
        <authorList>
            <person name="Bolotin A."/>
            <person name="Quinquis B."/>
            <person name="Renault P."/>
            <person name="Sorokin A."/>
            <person name="Ehrlich S.D."/>
            <person name="Kulakauskas S."/>
            <person name="Lapidus A."/>
            <person name="Goltsman E."/>
            <person name="Mazur M."/>
            <person name="Pusch G.D."/>
            <person name="Fonstein M."/>
            <person name="Overbeek R."/>
            <person name="Kyprides N."/>
            <person name="Purnelle B."/>
            <person name="Prozzi D."/>
            <person name="Ngui K."/>
            <person name="Masuy D."/>
            <person name="Hancy F."/>
            <person name="Burteau S."/>
            <person name="Boutry M."/>
            <person name="Delcour J."/>
            <person name="Goffeau A."/>
            <person name="Hols P."/>
        </authorList>
    </citation>
    <scope>NUCLEOTIDE SEQUENCE [LARGE SCALE GENOMIC DNA]</scope>
    <source>
        <strain>ATCC BAA-250 / LMG 18311</strain>
    </source>
</reference>
<comment type="catalytic activity">
    <reaction evidence="1">
        <text>tRNA(Arg) + L-arginine + ATP = L-arginyl-tRNA(Arg) + AMP + diphosphate</text>
        <dbReference type="Rhea" id="RHEA:20301"/>
        <dbReference type="Rhea" id="RHEA-COMP:9658"/>
        <dbReference type="Rhea" id="RHEA-COMP:9673"/>
        <dbReference type="ChEBI" id="CHEBI:30616"/>
        <dbReference type="ChEBI" id="CHEBI:32682"/>
        <dbReference type="ChEBI" id="CHEBI:33019"/>
        <dbReference type="ChEBI" id="CHEBI:78442"/>
        <dbReference type="ChEBI" id="CHEBI:78513"/>
        <dbReference type="ChEBI" id="CHEBI:456215"/>
        <dbReference type="EC" id="6.1.1.19"/>
    </reaction>
</comment>
<comment type="subunit">
    <text evidence="1">Monomer.</text>
</comment>
<comment type="subcellular location">
    <subcellularLocation>
        <location evidence="1">Cytoplasm</location>
    </subcellularLocation>
</comment>
<comment type="similarity">
    <text evidence="1">Belongs to the class-I aminoacyl-tRNA synthetase family.</text>
</comment>
<name>SYR_STRT2</name>
<keyword id="KW-0030">Aminoacyl-tRNA synthetase</keyword>
<keyword id="KW-0067">ATP-binding</keyword>
<keyword id="KW-0963">Cytoplasm</keyword>
<keyword id="KW-0436">Ligase</keyword>
<keyword id="KW-0547">Nucleotide-binding</keyword>
<keyword id="KW-0648">Protein biosynthesis</keyword>
<keyword id="KW-1185">Reference proteome</keyword>
<evidence type="ECO:0000255" key="1">
    <source>
        <dbReference type="HAMAP-Rule" id="MF_00123"/>
    </source>
</evidence>
<gene>
    <name evidence="1" type="primary">argS</name>
    <name type="ordered locus">stu0047</name>
</gene>
<protein>
    <recommendedName>
        <fullName evidence="1">Arginine--tRNA ligase</fullName>
        <ecNumber evidence="1">6.1.1.19</ecNumber>
    </recommendedName>
    <alternativeName>
        <fullName evidence="1">Arginyl-tRNA synthetase</fullName>
        <shortName evidence="1">ArgRS</shortName>
    </alternativeName>
</protein>